<protein>
    <recommendedName>
        <fullName evidence="1">Oligoribonuclease</fullName>
        <ecNumber evidence="1">3.1.15.-</ecNumber>
    </recommendedName>
</protein>
<comment type="function">
    <text evidence="1">3'-to-5' exoribonuclease specific for small oligoribonucleotides.</text>
</comment>
<comment type="subcellular location">
    <subcellularLocation>
        <location evidence="1">Cytoplasm</location>
    </subcellularLocation>
</comment>
<comment type="similarity">
    <text evidence="1">Belongs to the oligoribonuclease family.</text>
</comment>
<sequence>MKNNQNLIWIDLEMTGLEPEQDRIIEMATIVTDPQLNILAEGPVIAVSQPKILLDSMDAWNTKQHNQSGLVKRVLESNVSESQAEQLTIEFLKQYVDKGKSPMCGNSICQDRRFLYKYMPELAAYFHYRNLDVSSLKELVLRWRPELMNGVVKESKHLALDDIKDSINELIYYRQHFINLPEVKNDK</sequence>
<organism>
    <name type="scientific">Legionella pneumophila subsp. pneumophila (strain Philadelphia 1 / ATCC 33152 / DSM 7513)</name>
    <dbReference type="NCBI Taxonomy" id="272624"/>
    <lineage>
        <taxon>Bacteria</taxon>
        <taxon>Pseudomonadati</taxon>
        <taxon>Pseudomonadota</taxon>
        <taxon>Gammaproteobacteria</taxon>
        <taxon>Legionellales</taxon>
        <taxon>Legionellaceae</taxon>
        <taxon>Legionella</taxon>
    </lineage>
</organism>
<evidence type="ECO:0000255" key="1">
    <source>
        <dbReference type="HAMAP-Rule" id="MF_00045"/>
    </source>
</evidence>
<keyword id="KW-0963">Cytoplasm</keyword>
<keyword id="KW-0269">Exonuclease</keyword>
<keyword id="KW-0378">Hydrolase</keyword>
<keyword id="KW-0540">Nuclease</keyword>
<keyword id="KW-1185">Reference proteome</keyword>
<accession>Q5ZRY0</accession>
<proteinExistence type="inferred from homology"/>
<name>ORN_LEGPH</name>
<feature type="chain" id="PRO_0000111043" description="Oligoribonuclease">
    <location>
        <begin position="1"/>
        <end position="187"/>
    </location>
</feature>
<feature type="domain" description="Exonuclease" evidence="1">
    <location>
        <begin position="7"/>
        <end position="170"/>
    </location>
</feature>
<feature type="active site" evidence="1">
    <location>
        <position position="128"/>
    </location>
</feature>
<dbReference type="EC" id="3.1.15.-" evidence="1"/>
<dbReference type="EMBL" id="AE017354">
    <property type="protein sequence ID" value="AAU28797.1"/>
    <property type="molecule type" value="Genomic_DNA"/>
</dbReference>
<dbReference type="RefSeq" id="WP_010948439.1">
    <property type="nucleotide sequence ID" value="NC_002942.5"/>
</dbReference>
<dbReference type="RefSeq" id="YP_096744.1">
    <property type="nucleotide sequence ID" value="NC_002942.5"/>
</dbReference>
<dbReference type="SMR" id="Q5ZRY0"/>
<dbReference type="STRING" id="272624.lpg2741"/>
<dbReference type="PaxDb" id="272624-lpg2741"/>
<dbReference type="GeneID" id="57036742"/>
<dbReference type="KEGG" id="lpn:lpg2741"/>
<dbReference type="PATRIC" id="fig|272624.6.peg.2928"/>
<dbReference type="eggNOG" id="COG1949">
    <property type="taxonomic scope" value="Bacteria"/>
</dbReference>
<dbReference type="HOGENOM" id="CLU_064761_2_0_6"/>
<dbReference type="OrthoDB" id="9801329at2"/>
<dbReference type="Proteomes" id="UP000000609">
    <property type="component" value="Chromosome"/>
</dbReference>
<dbReference type="GO" id="GO:0005737">
    <property type="term" value="C:cytoplasm"/>
    <property type="evidence" value="ECO:0007669"/>
    <property type="project" value="UniProtKB-SubCell"/>
</dbReference>
<dbReference type="GO" id="GO:0000175">
    <property type="term" value="F:3'-5'-RNA exonuclease activity"/>
    <property type="evidence" value="ECO:0007669"/>
    <property type="project" value="InterPro"/>
</dbReference>
<dbReference type="GO" id="GO:0003676">
    <property type="term" value="F:nucleic acid binding"/>
    <property type="evidence" value="ECO:0007669"/>
    <property type="project" value="InterPro"/>
</dbReference>
<dbReference type="GO" id="GO:0006259">
    <property type="term" value="P:DNA metabolic process"/>
    <property type="evidence" value="ECO:0007669"/>
    <property type="project" value="UniProtKB-ARBA"/>
</dbReference>
<dbReference type="CDD" id="cd06135">
    <property type="entry name" value="Orn"/>
    <property type="match status" value="1"/>
</dbReference>
<dbReference type="FunFam" id="3.30.420.10:FF:000003">
    <property type="entry name" value="Oligoribonuclease"/>
    <property type="match status" value="1"/>
</dbReference>
<dbReference type="Gene3D" id="3.30.420.10">
    <property type="entry name" value="Ribonuclease H-like superfamily/Ribonuclease H"/>
    <property type="match status" value="1"/>
</dbReference>
<dbReference type="HAMAP" id="MF_00045">
    <property type="entry name" value="Oligoribonuclease"/>
    <property type="match status" value="1"/>
</dbReference>
<dbReference type="InterPro" id="IPR013520">
    <property type="entry name" value="Exonuclease_RNaseT/DNA_pol3"/>
</dbReference>
<dbReference type="InterPro" id="IPR022894">
    <property type="entry name" value="Oligoribonuclease"/>
</dbReference>
<dbReference type="InterPro" id="IPR012337">
    <property type="entry name" value="RNaseH-like_sf"/>
</dbReference>
<dbReference type="InterPro" id="IPR036397">
    <property type="entry name" value="RNaseH_sf"/>
</dbReference>
<dbReference type="NCBIfam" id="NF003765">
    <property type="entry name" value="PRK05359.1"/>
    <property type="match status" value="1"/>
</dbReference>
<dbReference type="PANTHER" id="PTHR11046">
    <property type="entry name" value="OLIGORIBONUCLEASE, MITOCHONDRIAL"/>
    <property type="match status" value="1"/>
</dbReference>
<dbReference type="PANTHER" id="PTHR11046:SF0">
    <property type="entry name" value="OLIGORIBONUCLEASE, MITOCHONDRIAL"/>
    <property type="match status" value="1"/>
</dbReference>
<dbReference type="Pfam" id="PF00929">
    <property type="entry name" value="RNase_T"/>
    <property type="match status" value="1"/>
</dbReference>
<dbReference type="SMART" id="SM00479">
    <property type="entry name" value="EXOIII"/>
    <property type="match status" value="1"/>
</dbReference>
<dbReference type="SUPFAM" id="SSF53098">
    <property type="entry name" value="Ribonuclease H-like"/>
    <property type="match status" value="1"/>
</dbReference>
<gene>
    <name evidence="1" type="primary">orn</name>
    <name type="ordered locus">lpg2741</name>
</gene>
<reference key="1">
    <citation type="journal article" date="2004" name="Science">
        <title>The genomic sequence of the accidental pathogen Legionella pneumophila.</title>
        <authorList>
            <person name="Chien M."/>
            <person name="Morozova I."/>
            <person name="Shi S."/>
            <person name="Sheng H."/>
            <person name="Chen J."/>
            <person name="Gomez S.M."/>
            <person name="Asamani G."/>
            <person name="Hill K."/>
            <person name="Nuara J."/>
            <person name="Feder M."/>
            <person name="Rineer J."/>
            <person name="Greenberg J.J."/>
            <person name="Steshenko V."/>
            <person name="Park S.H."/>
            <person name="Zhao B."/>
            <person name="Teplitskaya E."/>
            <person name="Edwards J.R."/>
            <person name="Pampou S."/>
            <person name="Georghiou A."/>
            <person name="Chou I.-C."/>
            <person name="Iannuccilli W."/>
            <person name="Ulz M.E."/>
            <person name="Kim D.H."/>
            <person name="Geringer-Sameth A."/>
            <person name="Goldsberry C."/>
            <person name="Morozov P."/>
            <person name="Fischer S.G."/>
            <person name="Segal G."/>
            <person name="Qu X."/>
            <person name="Rzhetsky A."/>
            <person name="Zhang P."/>
            <person name="Cayanis E."/>
            <person name="De Jong P.J."/>
            <person name="Ju J."/>
            <person name="Kalachikov S."/>
            <person name="Shuman H.A."/>
            <person name="Russo J.J."/>
        </authorList>
    </citation>
    <scope>NUCLEOTIDE SEQUENCE [LARGE SCALE GENOMIC DNA]</scope>
    <source>
        <strain>Philadelphia 1 / ATCC 33152 / DSM 7513</strain>
    </source>
</reference>